<organism>
    <name type="scientific">Caenorhabditis elegans</name>
    <dbReference type="NCBI Taxonomy" id="6239"/>
    <lineage>
        <taxon>Eukaryota</taxon>
        <taxon>Metazoa</taxon>
        <taxon>Ecdysozoa</taxon>
        <taxon>Nematoda</taxon>
        <taxon>Chromadorea</taxon>
        <taxon>Rhabditida</taxon>
        <taxon>Rhabditina</taxon>
        <taxon>Rhabditomorpha</taxon>
        <taxon>Rhabditoidea</taxon>
        <taxon>Rhabditidae</taxon>
        <taxon>Peloderinae</taxon>
        <taxon>Caenorhabditis</taxon>
    </lineage>
</organism>
<name>GEI13_CAEEL</name>
<sequence length="691" mass="76740">MTDCSSTLAALLPTADFTASLGNSDDHVDVSSFTTTSESTSPPYSSSEHHSPTDQRTETPTSDSGNASFSPENVATSFESSDRDASPDNLSTSSAHLNDLQEKGVVVDEELQRQLLRFHQDFKESLMENNQNTINMMSAAFNQQLFKQTLANLNTVTPQLPVNIPTGLPMPASPCTTAASAPSVESTPTKRKRQRRNPVWPYFDVIDGTARCKQCLYSTKSVFSTNLKVHLRSHHRPDYEKVIMAEDALNLNALLLSGNTSKLFNVDANRKRMPPMTSSILMTINKLANQQQNGEENPLNAVLRQTIANNGLQQHLQNVQTQLQAAQAAVQKQQQQQQQQQIQQQQQQQQQGAIPQFALNAANLAALNQLARNQMQPTPPPVPQVSQDNIINTLNFPAHIKQEIMNAPHGTDANGVPQPKRRRLRRHPVWVYFKDLEDRMVGCTNCEFRTGSAFSTNLKMHLKAHHKDDYEKVLQLEEEMRLEEGCFGPGNKFKTELIDYIRGGGNVTTPPTPNSSSFPSTPKTPQLVQQIISQSFARSQSPNVIQNGEIKIKKECEDDMFSGLSSTDKLAALVGIAGQEVKKEEAMPANFEEFRQRLLANSSLSSFLGQSTAQPIAVDLNGSVIASETKSPCSSNEDDRKQERDKALARLWADNETLLTNTHFREFVHCLAPEYEIPDVDILATSLVDQY</sequence>
<feature type="chain" id="PRO_0000065375" description="Gex-3-interacting protein 13">
    <location>
        <begin position="1"/>
        <end position="691"/>
    </location>
</feature>
<feature type="zinc finger region" description="BED-type 1" evidence="1">
    <location>
        <begin position="194"/>
        <end position="242"/>
    </location>
</feature>
<feature type="zinc finger region" description="BED-type 2" evidence="1">
    <location>
        <begin position="424"/>
        <end position="473"/>
    </location>
</feature>
<feature type="region of interest" description="Disordered" evidence="2">
    <location>
        <begin position="18"/>
        <end position="97"/>
    </location>
</feature>
<feature type="region of interest" description="Disordered" evidence="2">
    <location>
        <begin position="171"/>
        <end position="195"/>
    </location>
</feature>
<feature type="compositionally biased region" description="Low complexity" evidence="2">
    <location>
        <begin position="31"/>
        <end position="46"/>
    </location>
</feature>
<feature type="compositionally biased region" description="Basic and acidic residues" evidence="2">
    <location>
        <begin position="47"/>
        <end position="57"/>
    </location>
</feature>
<feature type="compositionally biased region" description="Polar residues" evidence="2">
    <location>
        <begin position="58"/>
        <end position="79"/>
    </location>
</feature>
<feature type="compositionally biased region" description="Low complexity" evidence="2">
    <location>
        <begin position="171"/>
        <end position="183"/>
    </location>
</feature>
<feature type="binding site" evidence="1">
    <location>
        <position position="212"/>
    </location>
    <ligand>
        <name>Zn(2+)</name>
        <dbReference type="ChEBI" id="CHEBI:29105"/>
        <label>1</label>
    </ligand>
</feature>
<feature type="binding site" evidence="1">
    <location>
        <position position="215"/>
    </location>
    <ligand>
        <name>Zn(2+)</name>
        <dbReference type="ChEBI" id="CHEBI:29105"/>
        <label>1</label>
    </ligand>
</feature>
<feature type="binding site" evidence="1">
    <location>
        <position position="230"/>
    </location>
    <ligand>
        <name>Zn(2+)</name>
        <dbReference type="ChEBI" id="CHEBI:29105"/>
        <label>1</label>
    </ligand>
</feature>
<feature type="binding site" evidence="1">
    <location>
        <position position="235"/>
    </location>
    <ligand>
        <name>Zn(2+)</name>
        <dbReference type="ChEBI" id="CHEBI:29105"/>
        <label>1</label>
    </ligand>
</feature>
<feature type="binding site" evidence="1">
    <location>
        <position position="443"/>
    </location>
    <ligand>
        <name>Zn(2+)</name>
        <dbReference type="ChEBI" id="CHEBI:29105"/>
        <label>2</label>
    </ligand>
</feature>
<feature type="binding site" evidence="1">
    <location>
        <position position="446"/>
    </location>
    <ligand>
        <name>Zn(2+)</name>
        <dbReference type="ChEBI" id="CHEBI:29105"/>
        <label>2</label>
    </ligand>
</feature>
<feature type="binding site" evidence="1">
    <location>
        <position position="461"/>
    </location>
    <ligand>
        <name>Zn(2+)</name>
        <dbReference type="ChEBI" id="CHEBI:29105"/>
        <label>2</label>
    </ligand>
</feature>
<feature type="binding site" evidence="1">
    <location>
        <position position="466"/>
    </location>
    <ligand>
        <name>Zn(2+)</name>
        <dbReference type="ChEBI" id="CHEBI:29105"/>
        <label>2</label>
    </ligand>
</feature>
<gene>
    <name type="primary">gei-13</name>
    <name type="ORF">F58A4.11</name>
</gene>
<proteinExistence type="evidence at protein level"/>
<comment type="subunit">
    <text evidence="3">Interacts with gex-3.</text>
</comment>
<comment type="disruption phenotype">
    <text evidence="3">No visible phenotype.</text>
</comment>
<reference key="1">
    <citation type="journal article" date="1994" name="Nature">
        <title>2.2 Mb of contiguous nucleotide sequence from chromosome III of C. elegans.</title>
        <authorList>
            <person name="Wilson R."/>
            <person name="Ainscough R."/>
            <person name="Anderson K."/>
            <person name="Baynes C."/>
            <person name="Berks M."/>
            <person name="Bonfield J."/>
            <person name="Burton J."/>
            <person name="Connell M."/>
            <person name="Copsey T."/>
            <person name="Cooper J."/>
            <person name="Coulson A."/>
            <person name="Craxton M."/>
            <person name="Dear S."/>
            <person name="Du Z."/>
            <person name="Durbin R."/>
            <person name="Favello A."/>
            <person name="Fraser A."/>
            <person name="Fulton L."/>
            <person name="Gardner A."/>
            <person name="Green P."/>
            <person name="Hawkins T."/>
            <person name="Hillier L."/>
            <person name="Jier M."/>
            <person name="Johnston L."/>
            <person name="Jones M."/>
            <person name="Kershaw J."/>
            <person name="Kirsten J."/>
            <person name="Laisster N."/>
            <person name="Latreille P."/>
            <person name="Lightning J."/>
            <person name="Lloyd C."/>
            <person name="Mortimore B."/>
            <person name="O'Callaghan M."/>
            <person name="Parsons J."/>
            <person name="Percy C."/>
            <person name="Rifken L."/>
            <person name="Roopra A."/>
            <person name="Saunders D."/>
            <person name="Shownkeen R."/>
            <person name="Sims M."/>
            <person name="Smaldon N."/>
            <person name="Smith A."/>
            <person name="Smith M."/>
            <person name="Sonnhammer E."/>
            <person name="Staden R."/>
            <person name="Sulston J."/>
            <person name="Thierry-Mieg J."/>
            <person name="Thomas K."/>
            <person name="Vaudin M."/>
            <person name="Vaughan K."/>
            <person name="Waterston R."/>
            <person name="Watson A."/>
            <person name="Weinstock L."/>
            <person name="Wilkinson-Sproat J."/>
            <person name="Wohldman P."/>
        </authorList>
    </citation>
    <scope>NUCLEOTIDE SEQUENCE [LARGE SCALE GENOMIC DNA]</scope>
    <source>
        <strain>Bristol N2</strain>
    </source>
</reference>
<reference key="2">
    <citation type="journal article" date="1998" name="Science">
        <title>Genome sequence of the nematode C. elegans: a platform for investigating biology.</title>
        <authorList>
            <consortium name="The C. elegans sequencing consortium"/>
        </authorList>
    </citation>
    <scope>NUCLEOTIDE SEQUENCE [LARGE SCALE GENOMIC DNA]</scope>
    <source>
        <strain>Bristol N2</strain>
    </source>
</reference>
<reference key="3">
    <citation type="journal article" date="2002" name="Biochem. Biophys. Res. Commun.">
        <title>Isolation of the interacting molecules with GEX-3 by a novel functional screening.</title>
        <authorList>
            <person name="Tsuboi D."/>
            <person name="Qadota H."/>
            <person name="Kasuya K."/>
            <person name="Amano M."/>
            <person name="Kaibuchi K."/>
        </authorList>
    </citation>
    <scope>INTERACTION WITH GEX-3</scope>
    <scope>DISRUPTION PHENOTYPE</scope>
</reference>
<dbReference type="EMBL" id="Z22179">
    <property type="protein sequence ID" value="CAA80171.2"/>
    <property type="molecule type" value="Genomic_DNA"/>
</dbReference>
<dbReference type="EMBL" id="Z22173">
    <property type="protein sequence ID" value="CAA80171.2"/>
    <property type="status" value="JOINED"/>
    <property type="molecule type" value="Genomic_DNA"/>
</dbReference>
<dbReference type="PIR" id="F88561">
    <property type="entry name" value="F88561"/>
</dbReference>
<dbReference type="PIR" id="S40983">
    <property type="entry name" value="S40983"/>
</dbReference>
<dbReference type="RefSeq" id="NP_499134.2">
    <property type="nucleotide sequence ID" value="NM_066733.5"/>
</dbReference>
<dbReference type="SMR" id="P34478"/>
<dbReference type="BioGRID" id="41559">
    <property type="interactions" value="6"/>
</dbReference>
<dbReference type="FunCoup" id="P34478">
    <property type="interactions" value="88"/>
</dbReference>
<dbReference type="IntAct" id="P34478">
    <property type="interactions" value="3"/>
</dbReference>
<dbReference type="STRING" id="6239.F58A4.11.1"/>
<dbReference type="PaxDb" id="6239-F58A4.11"/>
<dbReference type="PeptideAtlas" id="P34478"/>
<dbReference type="EnsemblMetazoa" id="F58A4.11.1">
    <property type="protein sequence ID" value="F58A4.11.1"/>
    <property type="gene ID" value="WBGene00001570"/>
</dbReference>
<dbReference type="GeneID" id="176364"/>
<dbReference type="KEGG" id="cel:CELE_F58A4.11"/>
<dbReference type="UCSC" id="F58A4.11">
    <property type="organism name" value="c. elegans"/>
</dbReference>
<dbReference type="AGR" id="WB:WBGene00001570"/>
<dbReference type="CTD" id="176364"/>
<dbReference type="WormBase" id="F58A4.11">
    <property type="protein sequence ID" value="CE40812"/>
    <property type="gene ID" value="WBGene00001570"/>
    <property type="gene designation" value="gei-13"/>
</dbReference>
<dbReference type="eggNOG" id="ENOG502SA89">
    <property type="taxonomic scope" value="Eukaryota"/>
</dbReference>
<dbReference type="HOGENOM" id="CLU_398633_0_0_1"/>
<dbReference type="InParanoid" id="P34478"/>
<dbReference type="OMA" id="NCEFRTG"/>
<dbReference type="OrthoDB" id="5873825at2759"/>
<dbReference type="PRO" id="PR:P34478"/>
<dbReference type="Proteomes" id="UP000001940">
    <property type="component" value="Chromosome III"/>
</dbReference>
<dbReference type="Bgee" id="WBGene00001570">
    <property type="expression patterns" value="Expressed in pharyngeal muscle cell (C elegans) and 3 other cell types or tissues"/>
</dbReference>
<dbReference type="GO" id="GO:0032021">
    <property type="term" value="C:NELF complex"/>
    <property type="evidence" value="ECO:0000318"/>
    <property type="project" value="GO_Central"/>
</dbReference>
<dbReference type="GO" id="GO:0003677">
    <property type="term" value="F:DNA binding"/>
    <property type="evidence" value="ECO:0007669"/>
    <property type="project" value="InterPro"/>
</dbReference>
<dbReference type="GO" id="GO:0008270">
    <property type="term" value="F:zinc ion binding"/>
    <property type="evidence" value="ECO:0007669"/>
    <property type="project" value="UniProtKB-KW"/>
</dbReference>
<dbReference type="GO" id="GO:0034244">
    <property type="term" value="P:negative regulation of transcription elongation by RNA polymerase II"/>
    <property type="evidence" value="ECO:0000318"/>
    <property type="project" value="GO_Central"/>
</dbReference>
<dbReference type="InterPro" id="IPR003656">
    <property type="entry name" value="Znf_BED"/>
</dbReference>
<dbReference type="InterPro" id="IPR036236">
    <property type="entry name" value="Znf_C2H2_sf"/>
</dbReference>
<dbReference type="SUPFAM" id="SSF57667">
    <property type="entry name" value="beta-beta-alpha zinc fingers"/>
    <property type="match status" value="2"/>
</dbReference>
<dbReference type="PROSITE" id="PS50808">
    <property type="entry name" value="ZF_BED"/>
    <property type="match status" value="2"/>
</dbReference>
<accession>P34478</accession>
<keyword id="KW-0479">Metal-binding</keyword>
<keyword id="KW-1185">Reference proteome</keyword>
<keyword id="KW-0677">Repeat</keyword>
<keyword id="KW-0862">Zinc</keyword>
<keyword id="KW-0863">Zinc-finger</keyword>
<evidence type="ECO:0000255" key="1">
    <source>
        <dbReference type="PROSITE-ProRule" id="PRU00027"/>
    </source>
</evidence>
<evidence type="ECO:0000256" key="2">
    <source>
        <dbReference type="SAM" id="MobiDB-lite"/>
    </source>
</evidence>
<evidence type="ECO:0000269" key="3">
    <source>
    </source>
</evidence>
<protein>
    <recommendedName>
        <fullName>Gex-3-interacting protein 13</fullName>
    </recommendedName>
</protein>